<keyword id="KW-0131">Cell cycle</keyword>
<keyword id="KW-0963">Cytoplasm</keyword>
<keyword id="KW-0342">GTP-binding</keyword>
<keyword id="KW-0547">Nucleotide-binding</keyword>
<keyword id="KW-0548">Nucleotidyltransferase</keyword>
<keyword id="KW-1185">Reference proteome</keyword>
<keyword id="KW-0808">Transferase</keyword>
<evidence type="ECO:0000250" key="1"/>
<evidence type="ECO:0000305" key="2"/>
<gene>
    <name type="primary">MPG1</name>
    <name type="ordered locus">DEHA2F01056g</name>
</gene>
<organism>
    <name type="scientific">Debaryomyces hansenii (strain ATCC 36239 / CBS 767 / BCRC 21394 / JCM 1990 / NBRC 0083 / IGC 2968)</name>
    <name type="common">Yeast</name>
    <name type="synonym">Torulaspora hansenii</name>
    <dbReference type="NCBI Taxonomy" id="284592"/>
    <lineage>
        <taxon>Eukaryota</taxon>
        <taxon>Fungi</taxon>
        <taxon>Dikarya</taxon>
        <taxon>Ascomycota</taxon>
        <taxon>Saccharomycotina</taxon>
        <taxon>Pichiomycetes</taxon>
        <taxon>Debaryomycetaceae</taxon>
        <taxon>Debaryomyces</taxon>
    </lineage>
</organism>
<feature type="chain" id="PRO_0000238487" description="Mannose-1-phosphate guanyltransferase">
    <location>
        <begin position="1"/>
        <end position="362"/>
    </location>
</feature>
<dbReference type="EC" id="2.7.7.13"/>
<dbReference type="EMBL" id="CR382138">
    <property type="protein sequence ID" value="CAG88712.1"/>
    <property type="molecule type" value="Genomic_DNA"/>
</dbReference>
<dbReference type="RefSeq" id="XP_460408.1">
    <property type="nucleotide sequence ID" value="XM_460408.1"/>
</dbReference>
<dbReference type="SMR" id="Q6BN12"/>
<dbReference type="FunCoup" id="Q6BN12">
    <property type="interactions" value="1529"/>
</dbReference>
<dbReference type="STRING" id="284592.Q6BN12"/>
<dbReference type="GeneID" id="2903808"/>
<dbReference type="KEGG" id="dha:DEHA2F01056g"/>
<dbReference type="VEuPathDB" id="FungiDB:DEHA2F01056g"/>
<dbReference type="eggNOG" id="KOG1322">
    <property type="taxonomic scope" value="Eukaryota"/>
</dbReference>
<dbReference type="HOGENOM" id="CLU_029499_0_0_1"/>
<dbReference type="InParanoid" id="Q6BN12"/>
<dbReference type="OMA" id="GPNCWIC"/>
<dbReference type="OrthoDB" id="1733332at2759"/>
<dbReference type="UniPathway" id="UPA00126">
    <property type="reaction ID" value="UER00930"/>
</dbReference>
<dbReference type="Proteomes" id="UP000000599">
    <property type="component" value="Chromosome F"/>
</dbReference>
<dbReference type="GO" id="GO:0005737">
    <property type="term" value="C:cytoplasm"/>
    <property type="evidence" value="ECO:0007669"/>
    <property type="project" value="UniProtKB-SubCell"/>
</dbReference>
<dbReference type="GO" id="GO:0005525">
    <property type="term" value="F:GTP binding"/>
    <property type="evidence" value="ECO:0007669"/>
    <property type="project" value="UniProtKB-KW"/>
</dbReference>
<dbReference type="GO" id="GO:0004475">
    <property type="term" value="F:mannose-1-phosphate guanylyltransferase (GTP) activity"/>
    <property type="evidence" value="ECO:0007669"/>
    <property type="project" value="UniProtKB-EC"/>
</dbReference>
<dbReference type="GO" id="GO:0009298">
    <property type="term" value="P:GDP-mannose biosynthetic process"/>
    <property type="evidence" value="ECO:0007669"/>
    <property type="project" value="UniProtKB-UniPathway"/>
</dbReference>
<dbReference type="CDD" id="cd06425">
    <property type="entry name" value="M1P_guanylylT_B_like_N"/>
    <property type="match status" value="1"/>
</dbReference>
<dbReference type="FunFam" id="2.160.10.10:FF:000017">
    <property type="entry name" value="Mannose-1-phosphate guanyltransferase"/>
    <property type="match status" value="1"/>
</dbReference>
<dbReference type="FunFam" id="3.90.550.10:FF:000013">
    <property type="entry name" value="mannose-1-phosphate guanyltransferase beta"/>
    <property type="match status" value="1"/>
</dbReference>
<dbReference type="Gene3D" id="2.160.10.10">
    <property type="entry name" value="Hexapeptide repeat proteins"/>
    <property type="match status" value="1"/>
</dbReference>
<dbReference type="Gene3D" id="3.90.550.10">
    <property type="entry name" value="Spore Coat Polysaccharide Biosynthesis Protein SpsA, Chain A"/>
    <property type="match status" value="1"/>
</dbReference>
<dbReference type="InterPro" id="IPR056729">
    <property type="entry name" value="GMPPB_C"/>
</dbReference>
<dbReference type="InterPro" id="IPR045233">
    <property type="entry name" value="GMPPB_N"/>
</dbReference>
<dbReference type="InterPro" id="IPR050486">
    <property type="entry name" value="Mannose-1P_guanyltransferase"/>
</dbReference>
<dbReference type="InterPro" id="IPR005835">
    <property type="entry name" value="NTP_transferase_dom"/>
</dbReference>
<dbReference type="InterPro" id="IPR029044">
    <property type="entry name" value="Nucleotide-diphossugar_trans"/>
</dbReference>
<dbReference type="PANTHER" id="PTHR22572">
    <property type="entry name" value="SUGAR-1-PHOSPHATE GUANYL TRANSFERASE"/>
    <property type="match status" value="1"/>
</dbReference>
<dbReference type="Pfam" id="PF25087">
    <property type="entry name" value="GMPPB_C"/>
    <property type="match status" value="1"/>
</dbReference>
<dbReference type="Pfam" id="PF00483">
    <property type="entry name" value="NTP_transferase"/>
    <property type="match status" value="1"/>
</dbReference>
<dbReference type="SUPFAM" id="SSF53448">
    <property type="entry name" value="Nucleotide-diphospho-sugar transferases"/>
    <property type="match status" value="1"/>
</dbReference>
<comment type="function">
    <text evidence="1">Involved in cell wall synthesis where it is required for glycosylation. Involved in cell cycle progression through cell-size checkpoint (By similarity).</text>
</comment>
<comment type="catalytic activity">
    <reaction>
        <text>alpha-D-mannose 1-phosphate + GTP + H(+) = GDP-alpha-D-mannose + diphosphate</text>
        <dbReference type="Rhea" id="RHEA:15229"/>
        <dbReference type="ChEBI" id="CHEBI:15378"/>
        <dbReference type="ChEBI" id="CHEBI:33019"/>
        <dbReference type="ChEBI" id="CHEBI:37565"/>
        <dbReference type="ChEBI" id="CHEBI:57527"/>
        <dbReference type="ChEBI" id="CHEBI:58409"/>
        <dbReference type="EC" id="2.7.7.13"/>
    </reaction>
</comment>
<comment type="pathway">
    <text>Nucleotide-sugar biosynthesis; GDP-alpha-D-mannose biosynthesis; GDP-alpha-D-mannose from alpha-D-mannose 1-phosphate (GTP route): step 1/1.</text>
</comment>
<comment type="subcellular location">
    <subcellularLocation>
        <location evidence="1">Cytoplasm</location>
    </subcellularLocation>
</comment>
<comment type="similarity">
    <text evidence="2">Belongs to the transferase hexapeptide repeat family.</text>
</comment>
<name>MPG1_DEBHA</name>
<protein>
    <recommendedName>
        <fullName>Mannose-1-phosphate guanyltransferase</fullName>
        <ecNumber>2.7.7.13</ecNumber>
    </recommendedName>
    <alternativeName>
        <fullName>ATP-mannose-1-phosphate guanylyltransferase</fullName>
    </alternativeName>
    <alternativeName>
        <fullName>GDP-mannose pyrophosphorylase</fullName>
    </alternativeName>
</protein>
<accession>Q6BN12</accession>
<sequence length="362" mass="39898">MKGLILVGGYGTRLRPLTLTLPKPLVEFGNRPMILHQIEALAKAGVTDIVLAVNYRPEVMVSTLKKYEAEYGVTITFSVEEEPLGTAGPLKLAEKVLKKDDTPIFVLNSDVICDYPFQELADFHKTSGGKATIVATKVDEPSKYGVIVHDRDTPNLIDRFVEKPVEFVGNRINAGLYILNPSVIDLIEMKPTSIEKETFPILVENKELYSFDLEGYWMDVGQPKDFLSGTVLYLTALSKKEPKKLCNEKFIHGGNVLVDPSAKIHPSALIGPNVVIGPNVVVGEGARIQRSVLLSNSEVKDHAWVKSTIVGWNSRIGKWARTDGITVLGDDVEIKNEVYVNGAKVLPHKSISSNVEHEAIIM</sequence>
<reference key="1">
    <citation type="journal article" date="2004" name="Nature">
        <title>Genome evolution in yeasts.</title>
        <authorList>
            <person name="Dujon B."/>
            <person name="Sherman D."/>
            <person name="Fischer G."/>
            <person name="Durrens P."/>
            <person name="Casaregola S."/>
            <person name="Lafontaine I."/>
            <person name="de Montigny J."/>
            <person name="Marck C."/>
            <person name="Neuveglise C."/>
            <person name="Talla E."/>
            <person name="Goffard N."/>
            <person name="Frangeul L."/>
            <person name="Aigle M."/>
            <person name="Anthouard V."/>
            <person name="Babour A."/>
            <person name="Barbe V."/>
            <person name="Barnay S."/>
            <person name="Blanchin S."/>
            <person name="Beckerich J.-M."/>
            <person name="Beyne E."/>
            <person name="Bleykasten C."/>
            <person name="Boisrame A."/>
            <person name="Boyer J."/>
            <person name="Cattolico L."/>
            <person name="Confanioleri F."/>
            <person name="de Daruvar A."/>
            <person name="Despons L."/>
            <person name="Fabre E."/>
            <person name="Fairhead C."/>
            <person name="Ferry-Dumazet H."/>
            <person name="Groppi A."/>
            <person name="Hantraye F."/>
            <person name="Hennequin C."/>
            <person name="Jauniaux N."/>
            <person name="Joyet P."/>
            <person name="Kachouri R."/>
            <person name="Kerrest A."/>
            <person name="Koszul R."/>
            <person name="Lemaire M."/>
            <person name="Lesur I."/>
            <person name="Ma L."/>
            <person name="Muller H."/>
            <person name="Nicaud J.-M."/>
            <person name="Nikolski M."/>
            <person name="Oztas S."/>
            <person name="Ozier-Kalogeropoulos O."/>
            <person name="Pellenz S."/>
            <person name="Potier S."/>
            <person name="Richard G.-F."/>
            <person name="Straub M.-L."/>
            <person name="Suleau A."/>
            <person name="Swennen D."/>
            <person name="Tekaia F."/>
            <person name="Wesolowski-Louvel M."/>
            <person name="Westhof E."/>
            <person name="Wirth B."/>
            <person name="Zeniou-Meyer M."/>
            <person name="Zivanovic Y."/>
            <person name="Bolotin-Fukuhara M."/>
            <person name="Thierry A."/>
            <person name="Bouchier C."/>
            <person name="Caudron B."/>
            <person name="Scarpelli C."/>
            <person name="Gaillardin C."/>
            <person name="Weissenbach J."/>
            <person name="Wincker P."/>
            <person name="Souciet J.-L."/>
        </authorList>
    </citation>
    <scope>NUCLEOTIDE SEQUENCE [LARGE SCALE GENOMIC DNA]</scope>
    <source>
        <strain>ATCC 36239 / CBS 767 / BCRC 21394 / JCM 1990 / NBRC 0083 / IGC 2968</strain>
    </source>
</reference>
<proteinExistence type="inferred from homology"/>